<proteinExistence type="evidence at transcript level"/>
<evidence type="ECO:0000250" key="1"/>
<evidence type="ECO:0000250" key="2">
    <source>
        <dbReference type="UniProtKB" id="Q2QL34"/>
    </source>
</evidence>
<evidence type="ECO:0000255" key="3"/>
<evidence type="ECO:0000305" key="4"/>
<organism>
    <name type="scientific">Xenopus laevis</name>
    <name type="common">African clawed frog</name>
    <dbReference type="NCBI Taxonomy" id="8355"/>
    <lineage>
        <taxon>Eukaryota</taxon>
        <taxon>Metazoa</taxon>
        <taxon>Chordata</taxon>
        <taxon>Craniata</taxon>
        <taxon>Vertebrata</taxon>
        <taxon>Euteleostomi</taxon>
        <taxon>Amphibia</taxon>
        <taxon>Batrachia</taxon>
        <taxon>Anura</taxon>
        <taxon>Pipoidea</taxon>
        <taxon>Pipidae</taxon>
        <taxon>Xenopodinae</taxon>
        <taxon>Xenopus</taxon>
        <taxon>Xenopus</taxon>
    </lineage>
</organism>
<name>MP17L_XENLA</name>
<protein>
    <recommendedName>
        <fullName>Mpv17-like protein</fullName>
    </recommendedName>
</protein>
<gene>
    <name type="primary">mpv17l</name>
</gene>
<sequence length="203" mass="23345">MRILIQFTKRHPWLTNVTIYGSLFASADIVQQKLSKSPTEPIDFKQTAKVGLVGFCFHANFNFFWLRFIERTFPGSAPLNVIRKVACDQLMAAPITISAFYTGLSLLDGERDVFKNLKEKFWPTYKTGVMCWTVFQTINFSVIPPFVRTAYIGVCAFLWTTFLCYIRNRDINEVTTRLLHAVPNIRGKMAFPQDQDDNKPADK</sequence>
<comment type="function">
    <text evidence="2">Participates in reactive oxygen species metabolism by up- or down-regulation of the genes of antioxidant enzymes. Protective against the mitochondrial apoptotic cascade.</text>
</comment>
<comment type="subcellular location">
    <subcellularLocation>
        <location evidence="1">Peroxisome membrane</location>
        <topology evidence="1">Multi-pass membrane protein</topology>
    </subcellularLocation>
</comment>
<comment type="similarity">
    <text evidence="4">Belongs to the peroxisomal membrane protein PXMP2/4 family.</text>
</comment>
<dbReference type="EMBL" id="BC079982">
    <property type="protein sequence ID" value="AAH79982.1"/>
    <property type="molecule type" value="mRNA"/>
</dbReference>
<dbReference type="RefSeq" id="NP_001087474.1">
    <property type="nucleotide sequence ID" value="NM_001094005.1"/>
</dbReference>
<dbReference type="RefSeq" id="XP_018082459.1">
    <property type="nucleotide sequence ID" value="XM_018226970.1"/>
</dbReference>
<dbReference type="RefSeq" id="XP_018082460.1">
    <property type="nucleotide sequence ID" value="XM_018226971.1"/>
</dbReference>
<dbReference type="DNASU" id="447298"/>
<dbReference type="GeneID" id="447298"/>
<dbReference type="KEGG" id="xla:447298"/>
<dbReference type="AGR" id="Xenbase:XB-GENE-5755335"/>
<dbReference type="CTD" id="447298"/>
<dbReference type="Xenbase" id="XB-GENE-5755335">
    <property type="gene designation" value="mpv17l.S"/>
</dbReference>
<dbReference type="OMA" id="VFWSTMQ"/>
<dbReference type="OrthoDB" id="5345392at2759"/>
<dbReference type="Proteomes" id="UP000186698">
    <property type="component" value="Chromosome 7S"/>
</dbReference>
<dbReference type="Bgee" id="447298">
    <property type="expression patterns" value="Expressed in neurula embryo and 19 other cell types or tissues"/>
</dbReference>
<dbReference type="GO" id="GO:0005737">
    <property type="term" value="C:cytoplasm"/>
    <property type="evidence" value="ECO:0000318"/>
    <property type="project" value="GO_Central"/>
</dbReference>
<dbReference type="GO" id="GO:0005739">
    <property type="term" value="C:mitochondrion"/>
    <property type="evidence" value="ECO:0000318"/>
    <property type="project" value="GO_Central"/>
</dbReference>
<dbReference type="GO" id="GO:0005778">
    <property type="term" value="C:peroxisomal membrane"/>
    <property type="evidence" value="ECO:0007669"/>
    <property type="project" value="UniProtKB-SubCell"/>
</dbReference>
<dbReference type="GO" id="GO:0061668">
    <property type="term" value="P:mitochondrial ribosome assembly"/>
    <property type="evidence" value="ECO:0000318"/>
    <property type="project" value="GO_Central"/>
</dbReference>
<dbReference type="InterPro" id="IPR007248">
    <property type="entry name" value="Mpv17_PMP22"/>
</dbReference>
<dbReference type="PANTHER" id="PTHR11266">
    <property type="entry name" value="PEROXISOMAL MEMBRANE PROTEIN 2, PXMP2 MPV17"/>
    <property type="match status" value="1"/>
</dbReference>
<dbReference type="PANTHER" id="PTHR11266:SF28">
    <property type="entry name" value="SI:CH211-120K19.1"/>
    <property type="match status" value="1"/>
</dbReference>
<dbReference type="Pfam" id="PF04117">
    <property type="entry name" value="Mpv17_PMP22"/>
    <property type="match status" value="1"/>
</dbReference>
<feature type="chain" id="PRO_0000333180" description="Mpv17-like protein">
    <location>
        <begin position="1"/>
        <end position="203"/>
    </location>
</feature>
<feature type="topological domain" description="Cytoplasmic" evidence="3">
    <location>
        <begin position="1"/>
        <end position="12"/>
    </location>
</feature>
<feature type="transmembrane region" description="Helical" evidence="3">
    <location>
        <begin position="13"/>
        <end position="30"/>
    </location>
</feature>
<feature type="topological domain" description="Lumenal" evidence="3">
    <location>
        <begin position="31"/>
        <end position="49"/>
    </location>
</feature>
<feature type="transmembrane region" description="Helical" evidence="3">
    <location>
        <begin position="50"/>
        <end position="69"/>
    </location>
</feature>
<feature type="topological domain" description="Cytoplasmic" evidence="3">
    <location>
        <begin position="70"/>
        <end position="89"/>
    </location>
</feature>
<feature type="transmembrane region" description="Helical" evidence="3">
    <location>
        <begin position="90"/>
        <end position="107"/>
    </location>
</feature>
<feature type="topological domain" description="Lumenal" evidence="3">
    <location>
        <begin position="108"/>
        <end position="143"/>
    </location>
</feature>
<feature type="transmembrane region" description="Helical" evidence="3">
    <location>
        <begin position="144"/>
        <end position="166"/>
    </location>
</feature>
<feature type="topological domain" description="Cytoplasmic" evidence="3">
    <location>
        <begin position="167"/>
        <end position="203"/>
    </location>
</feature>
<keyword id="KW-0472">Membrane</keyword>
<keyword id="KW-0576">Peroxisome</keyword>
<keyword id="KW-1185">Reference proteome</keyword>
<keyword id="KW-0812">Transmembrane</keyword>
<keyword id="KW-1133">Transmembrane helix</keyword>
<reference key="1">
    <citation type="submission" date="2004-08" db="EMBL/GenBank/DDBJ databases">
        <authorList>
            <consortium name="NIH - Xenopus Gene Collection (XGC) project"/>
        </authorList>
    </citation>
    <scope>NUCLEOTIDE SEQUENCE [LARGE SCALE MRNA]</scope>
    <source>
        <tissue>Ovary</tissue>
    </source>
</reference>
<accession>Q68F62</accession>